<organism>
    <name type="scientific">Conus bandanus</name>
    <name type="common">Banded marble cone</name>
    <dbReference type="NCBI Taxonomy" id="72279"/>
    <lineage>
        <taxon>Eukaryota</taxon>
        <taxon>Metazoa</taxon>
        <taxon>Spiralia</taxon>
        <taxon>Lophotrochozoa</taxon>
        <taxon>Mollusca</taxon>
        <taxon>Gastropoda</taxon>
        <taxon>Caenogastropoda</taxon>
        <taxon>Neogastropoda</taxon>
        <taxon>Conoidea</taxon>
        <taxon>Conidae</taxon>
        <taxon>Conus</taxon>
    </lineage>
</organism>
<evidence type="ECO:0000250" key="1"/>
<evidence type="ECO:0000250" key="2">
    <source>
        <dbReference type="UniProtKB" id="P56636"/>
    </source>
</evidence>
<evidence type="ECO:0000250" key="3">
    <source>
        <dbReference type="UniProtKB" id="Q2I2R8"/>
    </source>
</evidence>
<evidence type="ECO:0000305" key="4"/>
<evidence type="ECO:0000305" key="5">
    <source>
    </source>
</evidence>
<proteinExistence type="evidence at transcript level"/>
<comment type="function">
    <text evidence="3">Alpha-conotoxins act on postsynaptic membranes, they bind to the nicotinic acetylcholine receptors (nAChR) and thus inhibit them (By similarity). Has possibly a distinct nAChR binding mode from other alpha-conotoxins, due to a different three residue motif (lacks the Ser-Xaa-Pro motif) (By similarity).</text>
</comment>
<comment type="subcellular location">
    <subcellularLocation>
        <location evidence="5">Secreted</location>
    </subcellularLocation>
</comment>
<comment type="tissue specificity">
    <text evidence="5">Expressed by the venom duct.</text>
</comment>
<comment type="domain">
    <text evidence="4">The cysteine framework is I (CC-C-C). Alpha4/7 pattern.</text>
</comment>
<comment type="similarity">
    <text evidence="4">Belongs to the conotoxin A superfamily.</text>
</comment>
<feature type="propeptide" id="PRO_0000392690" evidence="1">
    <location>
        <begin position="1" status="less than"/>
        <end position="1"/>
    </location>
</feature>
<feature type="peptide" id="PRO_0000392691" description="Alpha-conotoxin-like Bn1.2">
    <location>
        <begin position="2"/>
        <end position="17"/>
    </location>
</feature>
<feature type="region of interest" description="Lacks the Ser-Xaa-Pro motif that is crucial for potent interaction with nAChR" evidence="4">
    <location>
        <begin position="5"/>
        <end position="7"/>
    </location>
</feature>
<feature type="modified residue" description="Cysteine amide" evidence="1">
    <location>
        <position position="17"/>
    </location>
</feature>
<feature type="disulfide bond" evidence="2">
    <location>
        <begin position="3"/>
        <end position="9"/>
    </location>
</feature>
<feature type="disulfide bond" evidence="2">
    <location>
        <begin position="4"/>
        <end position="17"/>
    </location>
</feature>
<feature type="non-terminal residue">
    <location>
        <position position="1"/>
    </location>
</feature>
<sequence length="18" mass="1951">KECCTHPACHVSHPELCG</sequence>
<accession>P0CE74</accession>
<accession>P0C1Y1</accession>
<protein>
    <recommendedName>
        <fullName>Alpha-conotoxin-like Bn1.2</fullName>
    </recommendedName>
</protein>
<name>CA12_CONBN</name>
<dbReference type="GO" id="GO:0005576">
    <property type="term" value="C:extracellular region"/>
    <property type="evidence" value="ECO:0007669"/>
    <property type="project" value="UniProtKB-SubCell"/>
</dbReference>
<dbReference type="GO" id="GO:0035792">
    <property type="term" value="C:host cell postsynaptic membrane"/>
    <property type="evidence" value="ECO:0007669"/>
    <property type="project" value="UniProtKB-KW"/>
</dbReference>
<dbReference type="GO" id="GO:0030550">
    <property type="term" value="F:acetylcholine receptor inhibitor activity"/>
    <property type="evidence" value="ECO:0007669"/>
    <property type="project" value="UniProtKB-KW"/>
</dbReference>
<dbReference type="GO" id="GO:0099106">
    <property type="term" value="F:ion channel regulator activity"/>
    <property type="evidence" value="ECO:0007669"/>
    <property type="project" value="UniProtKB-KW"/>
</dbReference>
<dbReference type="GO" id="GO:0090729">
    <property type="term" value="F:toxin activity"/>
    <property type="evidence" value="ECO:0007669"/>
    <property type="project" value="UniProtKB-KW"/>
</dbReference>
<dbReference type="InterPro" id="IPR009958">
    <property type="entry name" value="Conotoxin_a-typ"/>
</dbReference>
<dbReference type="Pfam" id="PF07365">
    <property type="entry name" value="Toxin_8"/>
    <property type="match status" value="1"/>
</dbReference>
<keyword id="KW-0008">Acetylcholine receptor inhibiting toxin</keyword>
<keyword id="KW-0027">Amidation</keyword>
<keyword id="KW-1015">Disulfide bond</keyword>
<keyword id="KW-0872">Ion channel impairing toxin</keyword>
<keyword id="KW-0528">Neurotoxin</keyword>
<keyword id="KW-0629">Postsynaptic neurotoxin</keyword>
<keyword id="KW-0964">Secreted</keyword>
<keyword id="KW-0800">Toxin</keyword>
<reference key="1">
    <citation type="journal article" date="2004" name="J. Biol. Chem.">
        <title>The A-superfamily of conotoxins: structural and functional divergence.</title>
        <authorList>
            <person name="Santos A.D."/>
            <person name="McIntosh J.M."/>
            <person name="Hillyard D.R."/>
            <person name="Cruz L.J."/>
            <person name="Olivera B.M."/>
        </authorList>
    </citation>
    <scope>NUCLEOTIDE SEQUENCE [MRNA]</scope>
    <source>
        <tissue>Venom duct</tissue>
    </source>
</reference>